<organism>
    <name type="scientific">Brucella abortus biovar 1 (strain 9-941)</name>
    <dbReference type="NCBI Taxonomy" id="262698"/>
    <lineage>
        <taxon>Bacteria</taxon>
        <taxon>Pseudomonadati</taxon>
        <taxon>Pseudomonadota</taxon>
        <taxon>Alphaproteobacteria</taxon>
        <taxon>Hyphomicrobiales</taxon>
        <taxon>Brucellaceae</taxon>
        <taxon>Brucella/Ochrobactrum group</taxon>
        <taxon>Brucella</taxon>
    </lineage>
</organism>
<keyword id="KW-0012">Acyltransferase</keyword>
<keyword id="KW-0963">Cytoplasm</keyword>
<keyword id="KW-0808">Transferase</keyword>
<name>BPT_BRUAB</name>
<comment type="function">
    <text evidence="1">Functions in the N-end rule pathway of protein degradation where it conjugates Leu from its aminoacyl-tRNA to the N-termini of proteins containing an N-terminal aspartate or glutamate.</text>
</comment>
<comment type="catalytic activity">
    <reaction evidence="1">
        <text>N-terminal L-glutamyl-[protein] + L-leucyl-tRNA(Leu) = N-terminal L-leucyl-L-glutamyl-[protein] + tRNA(Leu) + H(+)</text>
        <dbReference type="Rhea" id="RHEA:50412"/>
        <dbReference type="Rhea" id="RHEA-COMP:9613"/>
        <dbReference type="Rhea" id="RHEA-COMP:9622"/>
        <dbReference type="Rhea" id="RHEA-COMP:12664"/>
        <dbReference type="Rhea" id="RHEA-COMP:12668"/>
        <dbReference type="ChEBI" id="CHEBI:15378"/>
        <dbReference type="ChEBI" id="CHEBI:64721"/>
        <dbReference type="ChEBI" id="CHEBI:78442"/>
        <dbReference type="ChEBI" id="CHEBI:78494"/>
        <dbReference type="ChEBI" id="CHEBI:133041"/>
        <dbReference type="EC" id="2.3.2.29"/>
    </reaction>
</comment>
<comment type="catalytic activity">
    <reaction evidence="1">
        <text>N-terminal L-aspartyl-[protein] + L-leucyl-tRNA(Leu) = N-terminal L-leucyl-L-aspartyl-[protein] + tRNA(Leu) + H(+)</text>
        <dbReference type="Rhea" id="RHEA:50420"/>
        <dbReference type="Rhea" id="RHEA-COMP:9613"/>
        <dbReference type="Rhea" id="RHEA-COMP:9622"/>
        <dbReference type="Rhea" id="RHEA-COMP:12669"/>
        <dbReference type="Rhea" id="RHEA-COMP:12674"/>
        <dbReference type="ChEBI" id="CHEBI:15378"/>
        <dbReference type="ChEBI" id="CHEBI:64720"/>
        <dbReference type="ChEBI" id="CHEBI:78442"/>
        <dbReference type="ChEBI" id="CHEBI:78494"/>
        <dbReference type="ChEBI" id="CHEBI:133042"/>
        <dbReference type="EC" id="2.3.2.29"/>
    </reaction>
</comment>
<comment type="subcellular location">
    <subcellularLocation>
        <location evidence="1">Cytoplasm</location>
    </subcellularLocation>
</comment>
<comment type="similarity">
    <text evidence="1">Belongs to the R-transferase family. Bpt subfamily.</text>
</comment>
<gene>
    <name evidence="1" type="primary">bpt</name>
    <name type="ordered locus">BruAb1_0772</name>
</gene>
<accession>Q57DZ4</accession>
<feature type="chain" id="PRO_0000263172" description="Aspartate/glutamate leucyltransferase">
    <location>
        <begin position="1"/>
        <end position="249"/>
    </location>
</feature>
<reference key="1">
    <citation type="journal article" date="2005" name="J. Bacteriol.">
        <title>Completion of the genome sequence of Brucella abortus and comparison to the highly similar genomes of Brucella melitensis and Brucella suis.</title>
        <authorList>
            <person name="Halling S.M."/>
            <person name="Peterson-Burch B.D."/>
            <person name="Bricker B.J."/>
            <person name="Zuerner R.L."/>
            <person name="Qing Z."/>
            <person name="Li L.-L."/>
            <person name="Kapur V."/>
            <person name="Alt D.P."/>
            <person name="Olsen S.C."/>
        </authorList>
    </citation>
    <scope>NUCLEOTIDE SEQUENCE [LARGE SCALE GENOMIC DNA]</scope>
    <source>
        <strain>9-941</strain>
    </source>
</reference>
<sequence>MTHQPQQSPQFFLTAPSPCPYLEGQQERKVFTHLVGDKANEINDLLTQGGFRRSQNIAYRPACEVCRACISVRILAGEFEMTRNMRRVWSQNRDLIGRVHKAQPSTEQYALFRDYLDARHRSGGMSDMTVLDYAMMIEDTHVNTQIIEYRRRGPDSFMSAKGDGELIAVALTDVMADGLSMVYSFFLPHMQERSLGTYMILDHIERARAAGLPHVYLGYWVEGSRKMQYKIRFTPQEHLGPRGWQRFEG</sequence>
<evidence type="ECO:0000255" key="1">
    <source>
        <dbReference type="HAMAP-Rule" id="MF_00689"/>
    </source>
</evidence>
<proteinExistence type="inferred from homology"/>
<protein>
    <recommendedName>
        <fullName evidence="1">Aspartate/glutamate leucyltransferase</fullName>
        <ecNumber evidence="1">2.3.2.29</ecNumber>
    </recommendedName>
</protein>
<dbReference type="EC" id="2.3.2.29" evidence="1"/>
<dbReference type="EMBL" id="AE017223">
    <property type="protein sequence ID" value="AAX74140.1"/>
    <property type="molecule type" value="Genomic_DNA"/>
</dbReference>
<dbReference type="RefSeq" id="WP_002963894.1">
    <property type="nucleotide sequence ID" value="NC_006932.1"/>
</dbReference>
<dbReference type="SMR" id="Q57DZ4"/>
<dbReference type="EnsemblBacteria" id="AAX74140">
    <property type="protein sequence ID" value="AAX74140"/>
    <property type="gene ID" value="BruAb1_0772"/>
</dbReference>
<dbReference type="KEGG" id="bmb:BruAb1_0772"/>
<dbReference type="HOGENOM" id="CLU_077607_1_0_5"/>
<dbReference type="Proteomes" id="UP000000540">
    <property type="component" value="Chromosome I"/>
</dbReference>
<dbReference type="GO" id="GO:0005737">
    <property type="term" value="C:cytoplasm"/>
    <property type="evidence" value="ECO:0007669"/>
    <property type="project" value="UniProtKB-SubCell"/>
</dbReference>
<dbReference type="GO" id="GO:0004057">
    <property type="term" value="F:arginyl-tRNA--protein transferase activity"/>
    <property type="evidence" value="ECO:0007669"/>
    <property type="project" value="InterPro"/>
</dbReference>
<dbReference type="GO" id="GO:0008914">
    <property type="term" value="F:leucyl-tRNA--protein transferase activity"/>
    <property type="evidence" value="ECO:0007669"/>
    <property type="project" value="UniProtKB-UniRule"/>
</dbReference>
<dbReference type="GO" id="GO:0071596">
    <property type="term" value="P:ubiquitin-dependent protein catabolic process via the N-end rule pathway"/>
    <property type="evidence" value="ECO:0007669"/>
    <property type="project" value="InterPro"/>
</dbReference>
<dbReference type="HAMAP" id="MF_00689">
    <property type="entry name" value="Bpt"/>
    <property type="match status" value="1"/>
</dbReference>
<dbReference type="InterPro" id="IPR016181">
    <property type="entry name" value="Acyl_CoA_acyltransferase"/>
</dbReference>
<dbReference type="InterPro" id="IPR017138">
    <property type="entry name" value="Asp_Glu_LeuTrfase"/>
</dbReference>
<dbReference type="InterPro" id="IPR030700">
    <property type="entry name" value="N-end_Aminoacyl_Trfase"/>
</dbReference>
<dbReference type="InterPro" id="IPR007472">
    <property type="entry name" value="N-end_Aminoacyl_Trfase_C"/>
</dbReference>
<dbReference type="InterPro" id="IPR007471">
    <property type="entry name" value="N-end_Aminoacyl_Trfase_N"/>
</dbReference>
<dbReference type="NCBIfam" id="NF002341">
    <property type="entry name" value="PRK01305.1-1"/>
    <property type="match status" value="1"/>
</dbReference>
<dbReference type="NCBIfam" id="NF002343">
    <property type="entry name" value="PRK01305.1-4"/>
    <property type="match status" value="1"/>
</dbReference>
<dbReference type="NCBIfam" id="NF002346">
    <property type="entry name" value="PRK01305.2-3"/>
    <property type="match status" value="1"/>
</dbReference>
<dbReference type="PANTHER" id="PTHR21367">
    <property type="entry name" value="ARGININE-TRNA-PROTEIN TRANSFERASE 1"/>
    <property type="match status" value="1"/>
</dbReference>
<dbReference type="PANTHER" id="PTHR21367:SF1">
    <property type="entry name" value="ARGINYL-TRNA--PROTEIN TRANSFERASE 1"/>
    <property type="match status" value="1"/>
</dbReference>
<dbReference type="Pfam" id="PF04377">
    <property type="entry name" value="ATE_C"/>
    <property type="match status" value="1"/>
</dbReference>
<dbReference type="Pfam" id="PF04376">
    <property type="entry name" value="ATE_N"/>
    <property type="match status" value="1"/>
</dbReference>
<dbReference type="PIRSF" id="PIRSF037208">
    <property type="entry name" value="ATE_pro_prd"/>
    <property type="match status" value="1"/>
</dbReference>
<dbReference type="SUPFAM" id="SSF55729">
    <property type="entry name" value="Acyl-CoA N-acyltransferases (Nat)"/>
    <property type="match status" value="1"/>
</dbReference>